<organism>
    <name type="scientific">Escherichia coli O6:H1 (strain CFT073 / ATCC 700928 / UPEC)</name>
    <dbReference type="NCBI Taxonomy" id="199310"/>
    <lineage>
        <taxon>Bacteria</taxon>
        <taxon>Pseudomonadati</taxon>
        <taxon>Pseudomonadota</taxon>
        <taxon>Gammaproteobacteria</taxon>
        <taxon>Enterobacterales</taxon>
        <taxon>Enterobacteriaceae</taxon>
        <taxon>Escherichia</taxon>
    </lineage>
</organism>
<feature type="chain" id="PRO_0000050678" description="HTH-type transcriptional regulator GgaR">
    <location>
        <begin position="1"/>
        <end position="248"/>
    </location>
</feature>
<feature type="domain" description="HTH gntR-type" evidence="2">
    <location>
        <begin position="22"/>
        <end position="90"/>
    </location>
</feature>
<feature type="DNA-binding region" description="H-T-H motif" evidence="2">
    <location>
        <begin position="50"/>
        <end position="69"/>
    </location>
</feature>
<dbReference type="EMBL" id="AE014075">
    <property type="protein sequence ID" value="AAN81084.1"/>
    <property type="molecule type" value="Genomic_DNA"/>
</dbReference>
<dbReference type="RefSeq" id="WP_000434038.1">
    <property type="nucleotide sequence ID" value="NZ_CP051263.1"/>
</dbReference>
<dbReference type="SMR" id="P0ACM6"/>
<dbReference type="STRING" id="199310.c2628"/>
<dbReference type="KEGG" id="ecc:c2628"/>
<dbReference type="eggNOG" id="COG2188">
    <property type="taxonomic scope" value="Bacteria"/>
</dbReference>
<dbReference type="HOGENOM" id="CLU_063236_4_0_6"/>
<dbReference type="BioCyc" id="ECOL199310:C2628-MONOMER"/>
<dbReference type="Proteomes" id="UP000001410">
    <property type="component" value="Chromosome"/>
</dbReference>
<dbReference type="GO" id="GO:0003677">
    <property type="term" value="F:DNA binding"/>
    <property type="evidence" value="ECO:0007669"/>
    <property type="project" value="UniProtKB-KW"/>
</dbReference>
<dbReference type="GO" id="GO:0003700">
    <property type="term" value="F:DNA-binding transcription factor activity"/>
    <property type="evidence" value="ECO:0007669"/>
    <property type="project" value="InterPro"/>
</dbReference>
<dbReference type="GO" id="GO:0045892">
    <property type="term" value="P:negative regulation of DNA-templated transcription"/>
    <property type="evidence" value="ECO:0007669"/>
    <property type="project" value="TreeGrafter"/>
</dbReference>
<dbReference type="CDD" id="cd07377">
    <property type="entry name" value="WHTH_GntR"/>
    <property type="match status" value="1"/>
</dbReference>
<dbReference type="Gene3D" id="3.40.1410.10">
    <property type="entry name" value="Chorismate lyase-like"/>
    <property type="match status" value="1"/>
</dbReference>
<dbReference type="Gene3D" id="1.10.10.10">
    <property type="entry name" value="Winged helix-like DNA-binding domain superfamily/Winged helix DNA-binding domain"/>
    <property type="match status" value="1"/>
</dbReference>
<dbReference type="InterPro" id="IPR050679">
    <property type="entry name" value="Bact_HTH_transcr_reg"/>
</dbReference>
<dbReference type="InterPro" id="IPR028978">
    <property type="entry name" value="Chorismate_lyase_/UTRA_dom_sf"/>
</dbReference>
<dbReference type="InterPro" id="IPR000524">
    <property type="entry name" value="Tscrpt_reg_HTH_GntR"/>
</dbReference>
<dbReference type="InterPro" id="IPR011663">
    <property type="entry name" value="UTRA"/>
</dbReference>
<dbReference type="InterPro" id="IPR036388">
    <property type="entry name" value="WH-like_DNA-bd_sf"/>
</dbReference>
<dbReference type="InterPro" id="IPR036390">
    <property type="entry name" value="WH_DNA-bd_sf"/>
</dbReference>
<dbReference type="PANTHER" id="PTHR44846">
    <property type="entry name" value="MANNOSYL-D-GLYCERATE TRANSPORT/METABOLISM SYSTEM REPRESSOR MNGR-RELATED"/>
    <property type="match status" value="1"/>
</dbReference>
<dbReference type="PANTHER" id="PTHR44846:SF1">
    <property type="entry name" value="MANNOSYL-D-GLYCERATE TRANSPORT_METABOLISM SYSTEM REPRESSOR MNGR-RELATED"/>
    <property type="match status" value="1"/>
</dbReference>
<dbReference type="Pfam" id="PF00392">
    <property type="entry name" value="GntR"/>
    <property type="match status" value="1"/>
</dbReference>
<dbReference type="Pfam" id="PF07702">
    <property type="entry name" value="UTRA"/>
    <property type="match status" value="1"/>
</dbReference>
<dbReference type="PRINTS" id="PR00035">
    <property type="entry name" value="HTHGNTR"/>
</dbReference>
<dbReference type="SMART" id="SM00345">
    <property type="entry name" value="HTH_GNTR"/>
    <property type="match status" value="1"/>
</dbReference>
<dbReference type="SMART" id="SM00866">
    <property type="entry name" value="UTRA"/>
    <property type="match status" value="1"/>
</dbReference>
<dbReference type="SUPFAM" id="SSF64288">
    <property type="entry name" value="Chorismate lyase-like"/>
    <property type="match status" value="1"/>
</dbReference>
<dbReference type="SUPFAM" id="SSF46785">
    <property type="entry name" value="Winged helix' DNA-binding domain"/>
    <property type="match status" value="1"/>
</dbReference>
<dbReference type="PROSITE" id="PS50949">
    <property type="entry name" value="HTH_GNTR"/>
    <property type="match status" value="1"/>
</dbReference>
<comment type="function">
    <text evidence="1">Transcriptional regulator that regulates glycogen accumulation in response to the amount of glucose available to the cell. Acts as a repressor of the yegTUV operon, which may be involved in glycogen accumulation.</text>
</comment>
<comment type="activity regulation">
    <text evidence="1">Senses ADP-glucose (ADPG), which is the substrate for glycogen elongation, as an effector. In the presence of ADPG, GgaR becomes inactive and derepresses the yegTUV operon, leading to glycogen accumulation. In contrast, in the absence of glucose, the concentration of ADPG decreases, GgaR becomes active, and glycogen accumulation is repressed.</text>
</comment>
<accession>P0ACM6</accession>
<accession>O08014</accession>
<accession>P76420</accession>
<reference key="1">
    <citation type="journal article" date="2002" name="Proc. Natl. Acad. Sci. U.S.A.">
        <title>Extensive mosaic structure revealed by the complete genome sequence of uropathogenic Escherichia coli.</title>
        <authorList>
            <person name="Welch R.A."/>
            <person name="Burland V."/>
            <person name="Plunkett G. III"/>
            <person name="Redford P."/>
            <person name="Roesch P."/>
            <person name="Rasko D."/>
            <person name="Buckles E.L."/>
            <person name="Liou S.-R."/>
            <person name="Boutin A."/>
            <person name="Hackett J."/>
            <person name="Stroud D."/>
            <person name="Mayhew G.F."/>
            <person name="Rose D.J."/>
            <person name="Zhou S."/>
            <person name="Schwartz D.C."/>
            <person name="Perna N.T."/>
            <person name="Mobley H.L.T."/>
            <person name="Donnenberg M.S."/>
            <person name="Blattner F.R."/>
        </authorList>
    </citation>
    <scope>NUCLEOTIDE SEQUENCE [LARGE SCALE GENOMIC DNA]</scope>
    <source>
        <strain>CFT073 / ATCC 700928 / UPEC</strain>
    </source>
</reference>
<name>GGAR_ECOL6</name>
<evidence type="ECO:0000250" key="1">
    <source>
        <dbReference type="UniProtKB" id="P0ACM5"/>
    </source>
</evidence>
<evidence type="ECO:0000255" key="2">
    <source>
        <dbReference type="PROSITE-ProRule" id="PRU00307"/>
    </source>
</evidence>
<keyword id="KW-0238">DNA-binding</keyword>
<keyword id="KW-1185">Reference proteome</keyword>
<keyword id="KW-0678">Repressor</keyword>
<keyword id="KW-0804">Transcription</keyword>
<keyword id="KW-0805">Transcription regulation</keyword>
<protein>
    <recommendedName>
        <fullName evidence="1">HTH-type transcriptional regulator GgaR</fullName>
    </recommendedName>
    <alternativeName>
        <fullName evidence="1">Repressor of glycogen accumulation</fullName>
    </alternativeName>
</protein>
<proteinExistence type="inferred from homology"/>
<sequence>MEQAHTQLIAQLNERILAADNTPLYIKFAETVKNAVRSGVLEHGNILPGERDLSQLTGVSRITVRKAMQALEEEGVVTRSRGYGTQINNIFEYSLKEARGFSQQVVLRGKKPDTLWVNKRVVKCPEEVAQQLAVEAGSDVFLLKRIRYVDEEAVSIEESWVPAHLIHDVDAIGISLYDYFRSQHIYPQRTRSRVSARMPDAEFQSHIQLDSKIPVLVIKQVALDQQQRPIEYSISHCRSDLYVFVCEE</sequence>
<gene>
    <name evidence="1" type="primary">ggaR</name>
    <name type="synonym">yegW</name>
    <name type="ordered locus">c2628</name>
</gene>